<accession>F7UI86</accession>
<evidence type="ECO:0000250" key="1">
    <source>
        <dbReference type="UniProtKB" id="F7UI85"/>
    </source>
</evidence>
<evidence type="ECO:0000255" key="2"/>
<evidence type="ECO:0000256" key="3">
    <source>
        <dbReference type="SAM" id="MobiDB-lite"/>
    </source>
</evidence>
<evidence type="ECO:0000269" key="4">
    <source>
    </source>
</evidence>
<evidence type="ECO:0000303" key="5">
    <source>
    </source>
</evidence>
<evidence type="ECO:0000305" key="6"/>
<evidence type="ECO:0000305" key="7">
    <source>
    </source>
</evidence>
<proteinExistence type="evidence at protein level"/>
<comment type="function">
    <text evidence="4">Antimicrobial peptide with activity against the Gram-positive S.pyogenes (MIC=12.5 uM), but not against all other bacteria tested (both Gram-positive and Gram-negative) (PubMed:23967105). Does not show activity against fungi, and against Leishmania species (PubMed:23967105).</text>
</comment>
<comment type="biophysicochemical properties">
    <phDependence>
        <text evidence="4">Optimum pH is &lt;7. Is active against E.coli ATCC25922 at pH 5 (MIC=50 uM), whereas is not active at pH 7 (MIC&gt;200 uM).</text>
    </phDependence>
</comment>
<comment type="subcellular location">
    <subcellularLocation>
        <location evidence="4">Secreted</location>
    </subcellularLocation>
    <subcellularLocation>
        <location evidence="7">Target cell membrane</location>
    </subcellularLocation>
    <text evidence="7">Forms a helical membrane channel in the target.</text>
</comment>
<comment type="tissue specificity">
    <text evidence="7">Expressed by the skin glands.</text>
</comment>
<comment type="similarity">
    <text evidence="6">Belongs to the frog skin active peptide (FSAP) family. Phylloseptin subfamily.</text>
</comment>
<feature type="signal peptide" evidence="2">
    <location>
        <begin position="1"/>
        <end position="22"/>
    </location>
</feature>
<feature type="propeptide" id="PRO_0000449583" evidence="6">
    <location>
        <begin position="23"/>
        <end position="46"/>
    </location>
</feature>
<feature type="peptide" id="PRO_5003369566" description="Phylloseptin-S3">
    <location>
        <begin position="47"/>
        <end position="65"/>
    </location>
</feature>
<feature type="region of interest" description="Disordered" evidence="3">
    <location>
        <begin position="25"/>
        <end position="44"/>
    </location>
</feature>
<feature type="compositionally biased region" description="Acidic residues" evidence="3">
    <location>
        <begin position="30"/>
        <end position="41"/>
    </location>
</feature>
<feature type="modified residue" description="Phenylalanine amide" evidence="1">
    <location>
        <position position="65"/>
    </location>
</feature>
<sequence length="66" mass="7549">MAFLKKSLFLVLFLGLVSLSICEEEKRETEEEEHDQEEDDKSEEKRFLSLIPHIVSGVASLAIHFG</sequence>
<dbReference type="EMBL" id="AM903079">
    <property type="protein sequence ID" value="CAP17492.1"/>
    <property type="molecule type" value="mRNA"/>
</dbReference>
<dbReference type="GO" id="GO:0005576">
    <property type="term" value="C:extracellular region"/>
    <property type="evidence" value="ECO:0007669"/>
    <property type="project" value="UniProtKB-SubCell"/>
</dbReference>
<dbReference type="GO" id="GO:0016020">
    <property type="term" value="C:membrane"/>
    <property type="evidence" value="ECO:0007669"/>
    <property type="project" value="UniProtKB-KW"/>
</dbReference>
<dbReference type="GO" id="GO:0044218">
    <property type="term" value="C:other organism cell membrane"/>
    <property type="evidence" value="ECO:0007669"/>
    <property type="project" value="UniProtKB-KW"/>
</dbReference>
<dbReference type="GO" id="GO:0045087">
    <property type="term" value="P:innate immune response"/>
    <property type="evidence" value="ECO:0007669"/>
    <property type="project" value="UniProtKB-KW"/>
</dbReference>
<dbReference type="InterPro" id="IPR004275">
    <property type="entry name" value="Frog_antimicrobial_propeptide"/>
</dbReference>
<dbReference type="InterPro" id="IPR016322">
    <property type="entry name" value="FSAP"/>
</dbReference>
<dbReference type="Pfam" id="PF03032">
    <property type="entry name" value="FSAP_sig_propep"/>
    <property type="match status" value="1"/>
</dbReference>
<dbReference type="PIRSF" id="PIRSF001822">
    <property type="entry name" value="Dermaseptin_precursor"/>
    <property type="match status" value="1"/>
</dbReference>
<reference key="1">
    <citation type="journal article" date="2013" name="PLoS ONE">
        <title>Structure, antimicrobial activities and mode of interaction with membranes of novel [corrected] phylloseptins from the painted-belly leaf frog, Phyllomedusa sauvagii.</title>
        <authorList>
            <person name="Raja Z."/>
            <person name="Andre S."/>
            <person name="Piesse C."/>
            <person name="Sereno D."/>
            <person name="Nicolas P."/>
            <person name="Foulon T."/>
            <person name="Oury B."/>
            <person name="Ladram A."/>
        </authorList>
    </citation>
    <scope>NUCLEOTIDE SEQUENCE [MRNA]</scope>
    <scope>FUNCTION</scope>
    <scope>SYNTHESIS OF 47-65</scope>
    <scope>BIOPHYSICOCHEMICAL PROPERTIES</scope>
    <source>
        <tissue>Skin secretion</tissue>
    </source>
</reference>
<organism>
    <name type="scientific">Phyllomedusa sauvagei</name>
    <name type="common">Sauvage's leaf frog</name>
    <dbReference type="NCBI Taxonomy" id="8395"/>
    <lineage>
        <taxon>Eukaryota</taxon>
        <taxon>Metazoa</taxon>
        <taxon>Chordata</taxon>
        <taxon>Craniata</taxon>
        <taxon>Vertebrata</taxon>
        <taxon>Euteleostomi</taxon>
        <taxon>Amphibia</taxon>
        <taxon>Batrachia</taxon>
        <taxon>Anura</taxon>
        <taxon>Neobatrachia</taxon>
        <taxon>Hyloidea</taxon>
        <taxon>Hylidae</taxon>
        <taxon>Phyllomedusinae</taxon>
        <taxon>Phyllomedusa</taxon>
    </lineage>
</organism>
<protein>
    <recommendedName>
        <fullName evidence="5">Phylloseptin-S3</fullName>
        <shortName evidence="5">PLS-S3</shortName>
    </recommendedName>
</protein>
<name>PLS3_PHYSA</name>
<keyword id="KW-0027">Amidation</keyword>
<keyword id="KW-0878">Amphibian defense peptide</keyword>
<keyword id="KW-0165">Cleavage on pair of basic residues</keyword>
<keyword id="KW-0391">Immunity</keyword>
<keyword id="KW-0399">Innate immunity</keyword>
<keyword id="KW-0472">Membrane</keyword>
<keyword id="KW-0964">Secreted</keyword>
<keyword id="KW-0732">Signal</keyword>
<keyword id="KW-1052">Target cell membrane</keyword>
<keyword id="KW-1053">Target membrane</keyword>